<accession>Q7VNU4</accession>
<protein>
    <recommendedName>
        <fullName evidence="1">Na(+)-translocating NADH-quinone reductase subunit F</fullName>
        <shortName evidence="1">Na(+)-NQR subunit F</shortName>
        <shortName evidence="1">Na(+)-translocating NQR subunit F</shortName>
        <ecNumber evidence="1">7.2.1.1</ecNumber>
    </recommendedName>
    <alternativeName>
        <fullName evidence="1">NQR complex subunit F</fullName>
    </alternativeName>
    <alternativeName>
        <fullName evidence="1">NQR-1 subunit F</fullName>
    </alternativeName>
</protein>
<evidence type="ECO:0000255" key="1">
    <source>
        <dbReference type="HAMAP-Rule" id="MF_00430"/>
    </source>
</evidence>
<gene>
    <name evidence="1" type="primary">nqrF</name>
    <name type="ordered locus">HD_0384</name>
</gene>
<keyword id="KW-0001">2Fe-2S</keyword>
<keyword id="KW-0997">Cell inner membrane</keyword>
<keyword id="KW-1003">Cell membrane</keyword>
<keyword id="KW-0274">FAD</keyword>
<keyword id="KW-0285">Flavoprotein</keyword>
<keyword id="KW-0406">Ion transport</keyword>
<keyword id="KW-0408">Iron</keyword>
<keyword id="KW-0411">Iron-sulfur</keyword>
<keyword id="KW-0472">Membrane</keyword>
<keyword id="KW-0479">Metal-binding</keyword>
<keyword id="KW-0520">NAD</keyword>
<keyword id="KW-1185">Reference proteome</keyword>
<keyword id="KW-0915">Sodium</keyword>
<keyword id="KW-0739">Sodium transport</keyword>
<keyword id="KW-1278">Translocase</keyword>
<keyword id="KW-0812">Transmembrane</keyword>
<keyword id="KW-1133">Transmembrane helix</keyword>
<keyword id="KW-0813">Transport</keyword>
<keyword id="KW-0830">Ubiquinone</keyword>
<proteinExistence type="inferred from homology"/>
<feature type="chain" id="PRO_0000074495" description="Na(+)-translocating NADH-quinone reductase subunit F">
    <location>
        <begin position="1"/>
        <end position="409"/>
    </location>
</feature>
<feature type="transmembrane region" description="Helical" evidence="1">
    <location>
        <begin position="5"/>
        <end position="25"/>
    </location>
</feature>
<feature type="domain" description="2Fe-2S ferredoxin-type" evidence="1">
    <location>
        <begin position="34"/>
        <end position="128"/>
    </location>
</feature>
<feature type="domain" description="FAD-binding FR-type" evidence="1">
    <location>
        <begin position="131"/>
        <end position="271"/>
    </location>
</feature>
<feature type="binding site" evidence="1">
    <location>
        <position position="71"/>
    </location>
    <ligand>
        <name>[2Fe-2S] cluster</name>
        <dbReference type="ChEBI" id="CHEBI:190135"/>
    </ligand>
</feature>
<feature type="binding site" evidence="1">
    <location>
        <position position="77"/>
    </location>
    <ligand>
        <name>[2Fe-2S] cluster</name>
        <dbReference type="ChEBI" id="CHEBI:190135"/>
    </ligand>
</feature>
<feature type="binding site" evidence="1">
    <location>
        <position position="80"/>
    </location>
    <ligand>
        <name>[2Fe-2S] cluster</name>
        <dbReference type="ChEBI" id="CHEBI:190135"/>
    </ligand>
</feature>
<feature type="binding site" evidence="1">
    <location>
        <position position="112"/>
    </location>
    <ligand>
        <name>[2Fe-2S] cluster</name>
        <dbReference type="ChEBI" id="CHEBI:190135"/>
    </ligand>
</feature>
<reference key="1">
    <citation type="submission" date="2003-06" db="EMBL/GenBank/DDBJ databases">
        <title>The complete genome sequence of Haemophilus ducreyi.</title>
        <authorList>
            <person name="Munson R.S. Jr."/>
            <person name="Ray W.C."/>
            <person name="Mahairas G."/>
            <person name="Sabo P."/>
            <person name="Mungur R."/>
            <person name="Johnson L."/>
            <person name="Nguyen D."/>
            <person name="Wang J."/>
            <person name="Forst C."/>
            <person name="Hood L."/>
        </authorList>
    </citation>
    <scope>NUCLEOTIDE SEQUENCE [LARGE SCALE GENOMIC DNA]</scope>
    <source>
        <strain>35000HP / ATCC 700724</strain>
    </source>
</reference>
<comment type="function">
    <text evidence="1">NQR complex catalyzes the reduction of ubiquinone-1 to ubiquinol by two successive reactions, coupled with the transport of Na(+) ions from the cytoplasm to the periplasm. The first step is catalyzed by NqrF, which accepts electrons from NADH and reduces ubiquinone-1 to ubisemiquinone by a one-electron transfer pathway.</text>
</comment>
<comment type="catalytic activity">
    <reaction evidence="1">
        <text>a ubiquinone + n Na(+)(in) + NADH + H(+) = a ubiquinol + n Na(+)(out) + NAD(+)</text>
        <dbReference type="Rhea" id="RHEA:47748"/>
        <dbReference type="Rhea" id="RHEA-COMP:9565"/>
        <dbReference type="Rhea" id="RHEA-COMP:9566"/>
        <dbReference type="ChEBI" id="CHEBI:15378"/>
        <dbReference type="ChEBI" id="CHEBI:16389"/>
        <dbReference type="ChEBI" id="CHEBI:17976"/>
        <dbReference type="ChEBI" id="CHEBI:29101"/>
        <dbReference type="ChEBI" id="CHEBI:57540"/>
        <dbReference type="ChEBI" id="CHEBI:57945"/>
        <dbReference type="EC" id="7.2.1.1"/>
    </reaction>
</comment>
<comment type="cofactor">
    <cofactor evidence="1">
        <name>[2Fe-2S] cluster</name>
        <dbReference type="ChEBI" id="CHEBI:190135"/>
    </cofactor>
    <text evidence="1">Binds 1 [2Fe-2S] cluster.</text>
</comment>
<comment type="cofactor">
    <cofactor evidence="1">
        <name>FAD</name>
        <dbReference type="ChEBI" id="CHEBI:57692"/>
    </cofactor>
</comment>
<comment type="subunit">
    <text evidence="1">Composed of six subunits; NqrA, NqrB, NqrC, NqrD, NqrE and NqrF.</text>
</comment>
<comment type="subcellular location">
    <subcellularLocation>
        <location evidence="1">Cell inner membrane</location>
        <topology evidence="1">Single-pass membrane protein</topology>
    </subcellularLocation>
</comment>
<comment type="similarity">
    <text evidence="1">Belongs to the NqrF family.</text>
</comment>
<dbReference type="EC" id="7.2.1.1" evidence="1"/>
<dbReference type="EMBL" id="AE017143">
    <property type="protein sequence ID" value="AAP95354.1"/>
    <property type="molecule type" value="Genomic_DNA"/>
</dbReference>
<dbReference type="RefSeq" id="WP_010944407.1">
    <property type="nucleotide sequence ID" value="NC_002940.2"/>
</dbReference>
<dbReference type="SMR" id="Q7VNU4"/>
<dbReference type="STRING" id="233412.HD_0384"/>
<dbReference type="KEGG" id="hdu:HD_0384"/>
<dbReference type="eggNOG" id="COG2871">
    <property type="taxonomic scope" value="Bacteria"/>
</dbReference>
<dbReference type="HOGENOM" id="CLU_003827_7_2_6"/>
<dbReference type="OrthoDB" id="9806195at2"/>
<dbReference type="Proteomes" id="UP000001022">
    <property type="component" value="Chromosome"/>
</dbReference>
<dbReference type="GO" id="GO:0005886">
    <property type="term" value="C:plasma membrane"/>
    <property type="evidence" value="ECO:0007669"/>
    <property type="project" value="UniProtKB-SubCell"/>
</dbReference>
<dbReference type="GO" id="GO:0051537">
    <property type="term" value="F:2 iron, 2 sulfur cluster binding"/>
    <property type="evidence" value="ECO:0007669"/>
    <property type="project" value="UniProtKB-KW"/>
</dbReference>
<dbReference type="GO" id="GO:0009055">
    <property type="term" value="F:electron transfer activity"/>
    <property type="evidence" value="ECO:0007669"/>
    <property type="project" value="UniProtKB-UniRule"/>
</dbReference>
<dbReference type="GO" id="GO:0046872">
    <property type="term" value="F:metal ion binding"/>
    <property type="evidence" value="ECO:0007669"/>
    <property type="project" value="UniProtKB-KW"/>
</dbReference>
<dbReference type="GO" id="GO:0016655">
    <property type="term" value="F:oxidoreductase activity, acting on NAD(P)H, quinone or similar compound as acceptor"/>
    <property type="evidence" value="ECO:0007669"/>
    <property type="project" value="InterPro"/>
</dbReference>
<dbReference type="GO" id="GO:0006814">
    <property type="term" value="P:sodium ion transport"/>
    <property type="evidence" value="ECO:0007669"/>
    <property type="project" value="UniProtKB-UniRule"/>
</dbReference>
<dbReference type="CDD" id="cd06188">
    <property type="entry name" value="NADH_quinone_reductase"/>
    <property type="match status" value="1"/>
</dbReference>
<dbReference type="FunFam" id="2.40.30.10:FF:000064">
    <property type="entry name" value="Na(+)-translocating NADH-quinone reductase subunit F"/>
    <property type="match status" value="1"/>
</dbReference>
<dbReference type="FunFam" id="3.40.50.80:FF:000014">
    <property type="entry name" value="Na(+)-translocating NADH-quinone reductase subunit F"/>
    <property type="match status" value="1"/>
</dbReference>
<dbReference type="Gene3D" id="3.10.20.30">
    <property type="match status" value="1"/>
</dbReference>
<dbReference type="Gene3D" id="3.40.50.80">
    <property type="entry name" value="Nucleotide-binding domain of ferredoxin-NADP reductase (FNR) module"/>
    <property type="match status" value="1"/>
</dbReference>
<dbReference type="Gene3D" id="2.40.30.10">
    <property type="entry name" value="Translation factors"/>
    <property type="match status" value="1"/>
</dbReference>
<dbReference type="HAMAP" id="MF_00430">
    <property type="entry name" value="NqrF"/>
    <property type="match status" value="1"/>
</dbReference>
<dbReference type="InterPro" id="IPR036010">
    <property type="entry name" value="2Fe-2S_ferredoxin-like_sf"/>
</dbReference>
<dbReference type="InterPro" id="IPR001041">
    <property type="entry name" value="2Fe-2S_ferredoxin-type"/>
</dbReference>
<dbReference type="InterPro" id="IPR012675">
    <property type="entry name" value="Beta-grasp_dom_sf"/>
</dbReference>
<dbReference type="InterPro" id="IPR008333">
    <property type="entry name" value="Cbr1-like_FAD-bd_dom"/>
</dbReference>
<dbReference type="InterPro" id="IPR017927">
    <property type="entry name" value="FAD-bd_FR_type"/>
</dbReference>
<dbReference type="InterPro" id="IPR001709">
    <property type="entry name" value="Flavoprot_Pyr_Nucl_cyt_Rdtase"/>
</dbReference>
<dbReference type="InterPro" id="IPR039261">
    <property type="entry name" value="FNR_nucleotide-bd"/>
</dbReference>
<dbReference type="InterPro" id="IPR010205">
    <property type="entry name" value="NqrF"/>
</dbReference>
<dbReference type="InterPro" id="IPR001433">
    <property type="entry name" value="OxRdtase_FAD/NAD-bd"/>
</dbReference>
<dbReference type="InterPro" id="IPR017938">
    <property type="entry name" value="Riboflavin_synthase-like_b-brl"/>
</dbReference>
<dbReference type="NCBIfam" id="TIGR01941">
    <property type="entry name" value="nqrF"/>
    <property type="match status" value="1"/>
</dbReference>
<dbReference type="PANTHER" id="PTHR43644">
    <property type="entry name" value="NA(+)-TRANSLOCATING NADH-QUINONE REDUCTASE SUBUNIT"/>
    <property type="match status" value="1"/>
</dbReference>
<dbReference type="PANTHER" id="PTHR43644:SF1">
    <property type="entry name" value="NAD(P)H-FLAVIN REDUCTASE"/>
    <property type="match status" value="1"/>
</dbReference>
<dbReference type="Pfam" id="PF00970">
    <property type="entry name" value="FAD_binding_6"/>
    <property type="match status" value="1"/>
</dbReference>
<dbReference type="Pfam" id="PF00111">
    <property type="entry name" value="Fer2"/>
    <property type="match status" value="1"/>
</dbReference>
<dbReference type="Pfam" id="PF00175">
    <property type="entry name" value="NAD_binding_1"/>
    <property type="match status" value="1"/>
</dbReference>
<dbReference type="PIRSF" id="PIRSF000044">
    <property type="entry name" value="Cis_Diol_DH_RD"/>
    <property type="match status" value="1"/>
</dbReference>
<dbReference type="PRINTS" id="PR00371">
    <property type="entry name" value="FPNCR"/>
</dbReference>
<dbReference type="SUPFAM" id="SSF54292">
    <property type="entry name" value="2Fe-2S ferredoxin-like"/>
    <property type="match status" value="1"/>
</dbReference>
<dbReference type="SUPFAM" id="SSF52343">
    <property type="entry name" value="Ferredoxin reductase-like, C-terminal NADP-linked domain"/>
    <property type="match status" value="1"/>
</dbReference>
<dbReference type="SUPFAM" id="SSF63380">
    <property type="entry name" value="Riboflavin synthase domain-like"/>
    <property type="match status" value="1"/>
</dbReference>
<dbReference type="PROSITE" id="PS51085">
    <property type="entry name" value="2FE2S_FER_2"/>
    <property type="match status" value="1"/>
</dbReference>
<dbReference type="PROSITE" id="PS51384">
    <property type="entry name" value="FAD_FR"/>
    <property type="match status" value="1"/>
</dbReference>
<sequence length="409" mass="45612">MDNNFIFGIIAFTALVLVLAVIILFAKSKLVDSGDITISINDDPEKGITLPAGGKLLGALASKGIFVSSACGGGGSCGQCKVQVNSGGGEILPTELSHISKKEAKEGWRLACQVNVKSSMDVELPEEIFGVKKWECTVISNDNKATFIKELKLQIPEGEEVPFRAGGYIQIEAEPHTVNYKDFDIPKEYHEDWDKFNLWRYVSKVDEHIIRAYSMASYPEEKGIIMLNVRIATPPPRQPDAPPGQMSSYIWSLKAGDKVTISGPFGEFFAKETDNEMVFIGGGAGMAPMRSHIFDQLKRLKSKRKMSFWYGARSKREMFYVEDFDQLQAENDNFKWHVALSDPLPEDNWDGYTGFIHNVLYENYLKNHEAPEDCEYYMCGPPVMNAAVIGMLKSLGVEDENILLDDFGG</sequence>
<organism>
    <name type="scientific">Haemophilus ducreyi (strain 35000HP / ATCC 700724)</name>
    <dbReference type="NCBI Taxonomy" id="233412"/>
    <lineage>
        <taxon>Bacteria</taxon>
        <taxon>Pseudomonadati</taxon>
        <taxon>Pseudomonadota</taxon>
        <taxon>Gammaproteobacteria</taxon>
        <taxon>Pasteurellales</taxon>
        <taxon>Pasteurellaceae</taxon>
        <taxon>Haemophilus</taxon>
    </lineage>
</organism>
<name>NQRF_HAEDU</name>